<dbReference type="EMBL" id="CH379070">
    <property type="protein sequence ID" value="EAL29937.1"/>
    <property type="molecule type" value="Genomic_DNA"/>
</dbReference>
<dbReference type="SMR" id="Q29EX2"/>
<dbReference type="FunCoup" id="Q29EX2">
    <property type="interactions" value="2627"/>
</dbReference>
<dbReference type="STRING" id="46245.Q29EX2"/>
<dbReference type="EnsemblMetazoa" id="FBtr0288106">
    <property type="protein sequence ID" value="FBpp0286544"/>
    <property type="gene ID" value="FBgn0081944"/>
</dbReference>
<dbReference type="GeneID" id="4812055"/>
<dbReference type="KEGG" id="dpo:4812055"/>
<dbReference type="CTD" id="3646"/>
<dbReference type="eggNOG" id="KOG2758">
    <property type="taxonomic scope" value="Eukaryota"/>
</dbReference>
<dbReference type="HOGENOM" id="CLU_031132_0_0_1"/>
<dbReference type="InParanoid" id="Q29EX2"/>
<dbReference type="OMA" id="NCPWILR"/>
<dbReference type="PhylomeDB" id="Q29EX2"/>
<dbReference type="Proteomes" id="UP000001819">
    <property type="component" value="Chromosome X"/>
</dbReference>
<dbReference type="Bgee" id="FBgn0081944">
    <property type="expression patterns" value="Expressed in female reproductive system and 3 other cell types or tissues"/>
</dbReference>
<dbReference type="GO" id="GO:0016282">
    <property type="term" value="C:eukaryotic 43S preinitiation complex"/>
    <property type="evidence" value="ECO:0007669"/>
    <property type="project" value="UniProtKB-UniRule"/>
</dbReference>
<dbReference type="GO" id="GO:0033290">
    <property type="term" value="C:eukaryotic 48S preinitiation complex"/>
    <property type="evidence" value="ECO:0007669"/>
    <property type="project" value="UniProtKB-UniRule"/>
</dbReference>
<dbReference type="GO" id="GO:0071540">
    <property type="term" value="C:eukaryotic translation initiation factor 3 complex, eIF3e"/>
    <property type="evidence" value="ECO:0007669"/>
    <property type="project" value="UniProtKB-UniRule"/>
</dbReference>
<dbReference type="GO" id="GO:0003743">
    <property type="term" value="F:translation initiation factor activity"/>
    <property type="evidence" value="ECO:0007669"/>
    <property type="project" value="UniProtKB-UniRule"/>
</dbReference>
<dbReference type="GO" id="GO:0001732">
    <property type="term" value="P:formation of cytoplasmic translation initiation complex"/>
    <property type="evidence" value="ECO:0007669"/>
    <property type="project" value="UniProtKB-UniRule"/>
</dbReference>
<dbReference type="CDD" id="cd21378">
    <property type="entry name" value="eIF3E"/>
    <property type="match status" value="1"/>
</dbReference>
<dbReference type="HAMAP" id="MF_03004">
    <property type="entry name" value="eIF3e"/>
    <property type="match status" value="1"/>
</dbReference>
<dbReference type="InterPro" id="IPR016650">
    <property type="entry name" value="eIF3e"/>
</dbReference>
<dbReference type="InterPro" id="IPR019010">
    <property type="entry name" value="eIF3e_N"/>
</dbReference>
<dbReference type="InterPro" id="IPR000717">
    <property type="entry name" value="PCI_dom"/>
</dbReference>
<dbReference type="InterPro" id="IPR036390">
    <property type="entry name" value="WH_DNA-bd_sf"/>
</dbReference>
<dbReference type="PANTHER" id="PTHR10317">
    <property type="entry name" value="EUKARYOTIC TRANSLATION INITIATION FACTOR 3 SUBUNIT E"/>
    <property type="match status" value="1"/>
</dbReference>
<dbReference type="Pfam" id="PF09440">
    <property type="entry name" value="eIF3_N"/>
    <property type="match status" value="1"/>
</dbReference>
<dbReference type="Pfam" id="PF01399">
    <property type="entry name" value="PCI"/>
    <property type="match status" value="1"/>
</dbReference>
<dbReference type="PIRSF" id="PIRSF016255">
    <property type="entry name" value="eIF3e_su6"/>
    <property type="match status" value="1"/>
</dbReference>
<dbReference type="SMART" id="SM01186">
    <property type="entry name" value="eIF3_N"/>
    <property type="match status" value="1"/>
</dbReference>
<dbReference type="SMART" id="SM00088">
    <property type="entry name" value="PINT"/>
    <property type="match status" value="1"/>
</dbReference>
<dbReference type="SUPFAM" id="SSF46785">
    <property type="entry name" value="Winged helix' DNA-binding domain"/>
    <property type="match status" value="1"/>
</dbReference>
<dbReference type="PROSITE" id="PS50250">
    <property type="entry name" value="PCI"/>
    <property type="match status" value="1"/>
</dbReference>
<gene>
    <name type="primary">eIF3-S6</name>
    <name type="synonym">Int6</name>
    <name type="ORF">GA21959</name>
</gene>
<evidence type="ECO:0000250" key="1">
    <source>
        <dbReference type="UniProtKB" id="O77410"/>
    </source>
</evidence>
<evidence type="ECO:0000255" key="2">
    <source>
        <dbReference type="HAMAP-Rule" id="MF_03004"/>
    </source>
</evidence>
<evidence type="ECO:0000255" key="3">
    <source>
        <dbReference type="PROSITE-ProRule" id="PRU01185"/>
    </source>
</evidence>
<keyword id="KW-0963">Cytoplasm</keyword>
<keyword id="KW-0396">Initiation factor</keyword>
<keyword id="KW-0648">Protein biosynthesis</keyword>
<keyword id="KW-1185">Reference proteome</keyword>
<reference key="1">
    <citation type="journal article" date="2005" name="Genome Res.">
        <title>Comparative genome sequencing of Drosophila pseudoobscura: chromosomal, gene, and cis-element evolution.</title>
        <authorList>
            <person name="Richards S."/>
            <person name="Liu Y."/>
            <person name="Bettencourt B.R."/>
            <person name="Hradecky P."/>
            <person name="Letovsky S."/>
            <person name="Nielsen R."/>
            <person name="Thornton K."/>
            <person name="Hubisz M.J."/>
            <person name="Chen R."/>
            <person name="Meisel R.P."/>
            <person name="Couronne O."/>
            <person name="Hua S."/>
            <person name="Smith M.A."/>
            <person name="Zhang P."/>
            <person name="Liu J."/>
            <person name="Bussemaker H.J."/>
            <person name="van Batenburg M.F."/>
            <person name="Howells S.L."/>
            <person name="Scherer S.E."/>
            <person name="Sodergren E."/>
            <person name="Matthews B.B."/>
            <person name="Crosby M.A."/>
            <person name="Schroeder A.J."/>
            <person name="Ortiz-Barrientos D."/>
            <person name="Rives C.M."/>
            <person name="Metzker M.L."/>
            <person name="Muzny D.M."/>
            <person name="Scott G."/>
            <person name="Steffen D."/>
            <person name="Wheeler D.A."/>
            <person name="Worley K.C."/>
            <person name="Havlak P."/>
            <person name="Durbin K.J."/>
            <person name="Egan A."/>
            <person name="Gill R."/>
            <person name="Hume J."/>
            <person name="Morgan M.B."/>
            <person name="Miner G."/>
            <person name="Hamilton C."/>
            <person name="Huang Y."/>
            <person name="Waldron L."/>
            <person name="Verduzco D."/>
            <person name="Clerc-Blankenburg K.P."/>
            <person name="Dubchak I."/>
            <person name="Noor M.A.F."/>
            <person name="Anderson W."/>
            <person name="White K.P."/>
            <person name="Clark A.G."/>
            <person name="Schaeffer S.W."/>
            <person name="Gelbart W.M."/>
            <person name="Weinstock G.M."/>
            <person name="Gibbs R.A."/>
        </authorList>
    </citation>
    <scope>NUCLEOTIDE SEQUENCE [LARGE SCALE GENOMIC DNA]</scope>
    <source>
        <strain>MV2-25 / Tucson 14011-0121.94</strain>
    </source>
</reference>
<accession>Q29EX2</accession>
<organism>
    <name type="scientific">Drosophila pseudoobscura pseudoobscura</name>
    <name type="common">Fruit fly</name>
    <dbReference type="NCBI Taxonomy" id="46245"/>
    <lineage>
        <taxon>Eukaryota</taxon>
        <taxon>Metazoa</taxon>
        <taxon>Ecdysozoa</taxon>
        <taxon>Arthropoda</taxon>
        <taxon>Hexapoda</taxon>
        <taxon>Insecta</taxon>
        <taxon>Pterygota</taxon>
        <taxon>Neoptera</taxon>
        <taxon>Endopterygota</taxon>
        <taxon>Diptera</taxon>
        <taxon>Brachycera</taxon>
        <taxon>Muscomorpha</taxon>
        <taxon>Ephydroidea</taxon>
        <taxon>Drosophilidae</taxon>
        <taxon>Drosophila</taxon>
        <taxon>Sophophora</taxon>
    </lineage>
</organism>
<feature type="chain" id="PRO_0000365968" description="Eukaryotic translation initiation factor 3 subunit E">
    <location>
        <begin position="1"/>
        <end position="434"/>
    </location>
</feature>
<feature type="domain" description="PCI" evidence="3">
    <location>
        <begin position="219"/>
        <end position="392"/>
    </location>
</feature>
<name>EIF3E_DROPS</name>
<protein>
    <recommendedName>
        <fullName evidence="2">Eukaryotic translation initiation factor 3 subunit E</fullName>
        <shortName evidence="2">eIF3e</shortName>
    </recommendedName>
    <alternativeName>
        <fullName evidence="2">Eukaryotic translation initiation factor 3 subunit 6</fullName>
    </alternativeName>
</protein>
<sequence>MANFDLTRINCQYLDRHLTFPLLEFLCGKEIYNQQELLEYILETVNKTNMIDYTMDTRKRLNLSQEMPDELVQRKAEVLATLKQLQNEVAPIMKATDILKNGESMKDSKTFVNALQKDYNFKVEHLESAYKLAKYLYECGNYQESTSYLYFCLIVMSPNDKNYLNVLWGKLAAEILTLNWNTALEDLTRLRDYIDSANFSTIQALQQRTWLIHWSVLVFFNHPKGRDLIIEMFLYKPLYLNAIQTMCPHIMRYLATAVVINRTRRNALKDLIKVIQQESYTYRDPITEFLECLYVNFDFEGARLKLHECQTVILNDFFIVACLNEFVEDARLMIFETFCRIHQCITISMLADKLNMKPNEAECWIVNLIRNARLNAKIDSKLGHVVMGTQPLSPYQQLVEKIDSLSMRSEHLAGLIERKSKQNNKESIDSWKYY</sequence>
<proteinExistence type="inferred from homology"/>
<comment type="function">
    <text evidence="2">Component of the eukaryotic translation initiation factor 3 (eIF-3) complex, which is involved in protein synthesis of a specialized repertoire of mRNAs and, together with other initiation factors, stimulates binding of mRNA and methionyl-tRNAi to the 40S ribosome. The eIF-3 complex specifically targets and initiates translation of a subset of mRNAs involved in cell proliferation.</text>
</comment>
<comment type="subunit">
    <text evidence="1 2">Component of the eukaryotic translation initiation factor 3 (eIF-3) complex. The eIF-3 complex interacts with pix. Interacts with mxt (By similarity).</text>
</comment>
<comment type="subcellular location">
    <subcellularLocation>
        <location evidence="2">Cytoplasm</location>
    </subcellularLocation>
</comment>
<comment type="similarity">
    <text evidence="2">Belongs to the eIF-3 subunit E family.</text>
</comment>